<reference key="1">
    <citation type="submission" date="2007-11" db="EMBL/GenBank/DDBJ databases">
        <authorList>
            <consortium name="The Salmonella enterica serovar Arizonae Genome Sequencing Project"/>
            <person name="McClelland M."/>
            <person name="Sanderson E.K."/>
            <person name="Porwollik S."/>
            <person name="Spieth J."/>
            <person name="Clifton W.S."/>
            <person name="Fulton R."/>
            <person name="Chunyan W."/>
            <person name="Wollam A."/>
            <person name="Shah N."/>
            <person name="Pepin K."/>
            <person name="Bhonagiri V."/>
            <person name="Nash W."/>
            <person name="Johnson M."/>
            <person name="Thiruvilangam P."/>
            <person name="Wilson R."/>
        </authorList>
    </citation>
    <scope>NUCLEOTIDE SEQUENCE [LARGE SCALE GENOMIC DNA]</scope>
    <source>
        <strain>ATCC BAA-731 / CDC346-86 / RSK2980</strain>
    </source>
</reference>
<gene>
    <name evidence="1" type="primary">rpsH</name>
    <name type="ordered locus">SARI_04203</name>
</gene>
<keyword id="KW-1185">Reference proteome</keyword>
<keyword id="KW-0687">Ribonucleoprotein</keyword>
<keyword id="KW-0689">Ribosomal protein</keyword>
<keyword id="KW-0694">RNA-binding</keyword>
<keyword id="KW-0699">rRNA-binding</keyword>
<proteinExistence type="inferred from homology"/>
<feature type="chain" id="PRO_1000085940" description="Small ribosomal subunit protein uS8">
    <location>
        <begin position="1"/>
        <end position="130"/>
    </location>
</feature>
<organism>
    <name type="scientific">Salmonella arizonae (strain ATCC BAA-731 / CDC346-86 / RSK2980)</name>
    <dbReference type="NCBI Taxonomy" id="41514"/>
    <lineage>
        <taxon>Bacteria</taxon>
        <taxon>Pseudomonadati</taxon>
        <taxon>Pseudomonadota</taxon>
        <taxon>Gammaproteobacteria</taxon>
        <taxon>Enterobacterales</taxon>
        <taxon>Enterobacteriaceae</taxon>
        <taxon>Salmonella</taxon>
    </lineage>
</organism>
<sequence length="130" mass="14027">MSMQDPIADMLTRIRNGQAANKAAVTMPSSKLKVAIANVLKEEGFIEDFKVEGDTKPELELTLKYFQGKAVVESIQRVSRPGLRIYKGKDELPKVMAGLGIAVVSTSKGVMTDRAARQAGLGGEIICYVA</sequence>
<dbReference type="EMBL" id="CP000880">
    <property type="protein sequence ID" value="ABX23992.1"/>
    <property type="molecule type" value="Genomic_DNA"/>
</dbReference>
<dbReference type="SMR" id="A9MN62"/>
<dbReference type="STRING" id="41514.SARI_04203"/>
<dbReference type="KEGG" id="ses:SARI_04203"/>
<dbReference type="HOGENOM" id="CLU_098428_0_0_6"/>
<dbReference type="Proteomes" id="UP000002084">
    <property type="component" value="Chromosome"/>
</dbReference>
<dbReference type="GO" id="GO:1990904">
    <property type="term" value="C:ribonucleoprotein complex"/>
    <property type="evidence" value="ECO:0007669"/>
    <property type="project" value="UniProtKB-KW"/>
</dbReference>
<dbReference type="GO" id="GO:0005840">
    <property type="term" value="C:ribosome"/>
    <property type="evidence" value="ECO:0007669"/>
    <property type="project" value="UniProtKB-KW"/>
</dbReference>
<dbReference type="GO" id="GO:0019843">
    <property type="term" value="F:rRNA binding"/>
    <property type="evidence" value="ECO:0007669"/>
    <property type="project" value="UniProtKB-UniRule"/>
</dbReference>
<dbReference type="GO" id="GO:0003735">
    <property type="term" value="F:structural constituent of ribosome"/>
    <property type="evidence" value="ECO:0007669"/>
    <property type="project" value="InterPro"/>
</dbReference>
<dbReference type="GO" id="GO:0006412">
    <property type="term" value="P:translation"/>
    <property type="evidence" value="ECO:0007669"/>
    <property type="project" value="UniProtKB-UniRule"/>
</dbReference>
<dbReference type="FunFam" id="3.30.1370.30:FF:000003">
    <property type="entry name" value="30S ribosomal protein S8"/>
    <property type="match status" value="1"/>
</dbReference>
<dbReference type="FunFam" id="3.30.1490.10:FF:000001">
    <property type="entry name" value="30S ribosomal protein S8"/>
    <property type="match status" value="1"/>
</dbReference>
<dbReference type="Gene3D" id="3.30.1370.30">
    <property type="match status" value="1"/>
</dbReference>
<dbReference type="Gene3D" id="3.30.1490.10">
    <property type="match status" value="1"/>
</dbReference>
<dbReference type="HAMAP" id="MF_01302_B">
    <property type="entry name" value="Ribosomal_uS8_B"/>
    <property type="match status" value="1"/>
</dbReference>
<dbReference type="InterPro" id="IPR000630">
    <property type="entry name" value="Ribosomal_uS8"/>
</dbReference>
<dbReference type="InterPro" id="IPR047863">
    <property type="entry name" value="Ribosomal_uS8_CS"/>
</dbReference>
<dbReference type="InterPro" id="IPR035987">
    <property type="entry name" value="Ribosomal_uS8_sf"/>
</dbReference>
<dbReference type="NCBIfam" id="NF001109">
    <property type="entry name" value="PRK00136.1"/>
    <property type="match status" value="1"/>
</dbReference>
<dbReference type="PANTHER" id="PTHR11758">
    <property type="entry name" value="40S RIBOSOMAL PROTEIN S15A"/>
    <property type="match status" value="1"/>
</dbReference>
<dbReference type="Pfam" id="PF00410">
    <property type="entry name" value="Ribosomal_S8"/>
    <property type="match status" value="1"/>
</dbReference>
<dbReference type="SUPFAM" id="SSF56047">
    <property type="entry name" value="Ribosomal protein S8"/>
    <property type="match status" value="1"/>
</dbReference>
<dbReference type="PROSITE" id="PS00053">
    <property type="entry name" value="RIBOSOMAL_S8"/>
    <property type="match status" value="1"/>
</dbReference>
<protein>
    <recommendedName>
        <fullName evidence="1">Small ribosomal subunit protein uS8</fullName>
    </recommendedName>
    <alternativeName>
        <fullName evidence="2">30S ribosomal protein S8</fullName>
    </alternativeName>
</protein>
<comment type="function">
    <text evidence="1">One of the primary rRNA binding proteins, it binds directly to 16S rRNA central domain where it helps coordinate assembly of the platform of the 30S subunit.</text>
</comment>
<comment type="subunit">
    <text evidence="1">Part of the 30S ribosomal subunit. Contacts proteins S5 and S12.</text>
</comment>
<comment type="similarity">
    <text evidence="1">Belongs to the universal ribosomal protein uS8 family.</text>
</comment>
<name>RS8_SALAR</name>
<evidence type="ECO:0000255" key="1">
    <source>
        <dbReference type="HAMAP-Rule" id="MF_01302"/>
    </source>
</evidence>
<evidence type="ECO:0000305" key="2"/>
<accession>A9MN62</accession>